<proteinExistence type="evidence at protein level"/>
<accession>Q9SQ67</accession>
<accession>A0A4Y7K5M1</accession>
<accession>B9VRJ3</accession>
<keyword id="KW-0017">Alkaloid metabolism</keyword>
<keyword id="KW-0963">Cytoplasm</keyword>
<keyword id="KW-0903">Direct protein sequencing</keyword>
<keyword id="KW-0521">NADP</keyword>
<keyword id="KW-0560">Oxidoreductase</keyword>
<keyword id="KW-1185">Reference proteome</keyword>
<organism>
    <name type="scientific">Papaver somniferum</name>
    <name type="common">Opium poppy</name>
    <dbReference type="NCBI Taxonomy" id="3469"/>
    <lineage>
        <taxon>Eukaryota</taxon>
        <taxon>Viridiplantae</taxon>
        <taxon>Streptophyta</taxon>
        <taxon>Embryophyta</taxon>
        <taxon>Tracheophyta</taxon>
        <taxon>Spermatophyta</taxon>
        <taxon>Magnoliopsida</taxon>
        <taxon>Ranunculales</taxon>
        <taxon>Papaveraceae</taxon>
        <taxon>Papaveroideae</taxon>
        <taxon>Papaver</taxon>
    </lineage>
</organism>
<name>COR14_PAPSO</name>
<sequence>MESNGVPMITLSSGIRMPALGMGTAETMVKGTEREKLAFLKAIEVGYRHFDTAAAYQSEECLGEAIAEALQLGLIKSRDELFITSKLWCADAHADLVLPALQNSLRNLKLEYLDLYLIHHPVSLKPGKFVNEIPKDHILPMDYKTVWAAMEECQTLGFTRAIGVSNFSCKKLQELMAAAKIPPVVNQVEMSPTLHQKNLREYCKANNIMITAHSVLGAIGAPWGSNAVMDSKVLHQIAVARGKSVAQVSMRWVYQQGASLVVKSFNEGRMKENLKIFDWELTAEDMEKISEIPQSRTSSADFLLSPTGPFKTEEEFWDEKD</sequence>
<comment type="function">
    <text evidence="3 5 9 11 12">NADPH-dependent codeinone reductase involved in biosynthesis of morphinan-type benzylisoquinoline and opiate alkaloids natural products (PubMed:10417697, PubMed:15543134, PubMed:29779229). Reduces codeinone to codeine in the penultimate step in morphine biosynthesis (PubMed:10417697, PubMed:15543134, PubMed:22098111, PubMed:29779229). Can use morphinone, hydrocodone and hydromorphone as substrate during reductive reaction with NADPH as cofactor, and morphine and dihydrocodeine as substrate during oxidative reaction with NADP as cofactor (PubMed:10417697). Converts morphinone to morphine, and neomorphinone to neomorphine (By similarity). Reduces irreversibly neopinone, a spontaneous isomer of codeinone, to neopine; in planta, neopine levels are limited to low levels (PubMed:29779229).</text>
</comment>
<comment type="catalytic activity">
    <reaction evidence="5 11 12">
        <text>codeine + NADP(+) = codeinone + NADPH + H(+)</text>
        <dbReference type="Rhea" id="RHEA:19209"/>
        <dbReference type="ChEBI" id="CHEBI:15378"/>
        <dbReference type="ChEBI" id="CHEBI:57783"/>
        <dbReference type="ChEBI" id="CHEBI:57871"/>
        <dbReference type="ChEBI" id="CHEBI:58349"/>
        <dbReference type="ChEBI" id="CHEBI:58473"/>
        <dbReference type="EC" id="1.1.1.247"/>
    </reaction>
    <physiologicalReaction direction="left-to-right" evidence="5 12">
        <dbReference type="Rhea" id="RHEA:19210"/>
    </physiologicalReaction>
    <physiologicalReaction direction="right-to-left" evidence="5 12">
        <dbReference type="Rhea" id="RHEA:19211"/>
    </physiologicalReaction>
</comment>
<comment type="catalytic activity">
    <reaction evidence="12">
        <text>neopine + NADP(+) = neopinone + NADPH + H(+)</text>
        <dbReference type="Rhea" id="RHEA:75135"/>
        <dbReference type="ChEBI" id="CHEBI:15378"/>
        <dbReference type="ChEBI" id="CHEBI:57783"/>
        <dbReference type="ChEBI" id="CHEBI:58349"/>
        <dbReference type="ChEBI" id="CHEBI:59950"/>
        <dbReference type="ChEBI" id="CHEBI:194190"/>
        <dbReference type="EC" id="1.1.1.247"/>
    </reaction>
    <physiologicalReaction direction="right-to-left" evidence="12">
        <dbReference type="Rhea" id="RHEA:75137"/>
    </physiologicalReaction>
</comment>
<comment type="catalytic activity">
    <reaction evidence="12">
        <text>morphine + NADP(+) = morphinone + NADPH + H(+)</text>
        <dbReference type="Rhea" id="RHEA:14321"/>
        <dbReference type="ChEBI" id="CHEBI:15378"/>
        <dbReference type="ChEBI" id="CHEBI:57728"/>
        <dbReference type="ChEBI" id="CHEBI:57783"/>
        <dbReference type="ChEBI" id="CHEBI:58097"/>
        <dbReference type="ChEBI" id="CHEBI:58349"/>
    </reaction>
    <physiologicalReaction direction="left-to-right" evidence="12">
        <dbReference type="Rhea" id="RHEA:14322"/>
    </physiologicalReaction>
    <physiologicalReaction direction="right-to-left" evidence="12">
        <dbReference type="Rhea" id="RHEA:14323"/>
    </physiologicalReaction>
</comment>
<comment type="catalytic activity">
    <reaction evidence="12">
        <text>neomorphine + NADP(+) = neomorphinone + NADPH + H(+)</text>
        <dbReference type="Rhea" id="RHEA:75971"/>
        <dbReference type="ChEBI" id="CHEBI:15378"/>
        <dbReference type="ChEBI" id="CHEBI:57783"/>
        <dbReference type="ChEBI" id="CHEBI:58349"/>
        <dbReference type="ChEBI" id="CHEBI:194188"/>
        <dbReference type="ChEBI" id="CHEBI:194513"/>
    </reaction>
    <physiologicalReaction direction="right-to-left" evidence="12">
        <dbReference type="Rhea" id="RHEA:75973"/>
    </physiologicalReaction>
</comment>
<comment type="biophysicochemical properties">
    <kinetics>
        <KM evidence="5">140 uM for codeine (at pH 9.0 and 30 degrees Celsius)</KM>
        <KM evidence="5">50 uM for codeinone (at pH 9.0 and 30 degrees Celsius)</KM>
        <KM evidence="5">197 uM for NADPH (at pH 9.0 and 30 degrees Celsius)</KM>
        <KM evidence="5">55 uM for NADP (at pH 9.0 and 30 degrees Celsius)</KM>
    </kinetics>
    <phDependence>
        <text evidence="5">Optimum pH is 6.8 for reduction (forward reaction) and 9.0 for oxidation (reverse reaction).</text>
    </phDependence>
    <temperatureDependence>
        <text evidence="5">Optimum temperature is 28 degrees Celsius for reduction (forward reaction) and 30 degrees Celsius for reduction (reverse reaction).</text>
    </temperatureDependence>
</comment>
<comment type="pathway">
    <text evidence="5 12">Alkaloid biosynthesis; morphine biosynthesis.</text>
</comment>
<comment type="subcellular location">
    <subcellularLocation>
        <location evidence="6">Cytoplasm</location>
        <location evidence="6">Cytosol</location>
    </subcellularLocation>
    <text evidence="6 7">Present in the cytosolic part of laticifer cells that secrete latex (PubMed:11079569). Localized to the parietal region of the sieve element cytoplasm (PubMed:14508000).</text>
</comment>
<comment type="tissue specificity">
    <text evidence="5 6 7 8 13">Latex secreting cells (laticifer cells). Expressed constitutively in all organs with highest levels in capsules (PubMed:15353584, PubMed:29872026). Restricted to the parietal region of sieve elements adjacent or proximal to laticifers in roots, stems, leaves and carpels (PubMed:14508000).</text>
</comment>
<comment type="developmental stage">
    <text evidence="10 13">Increases rapidly between 1 and 4 days after seed germination (PubMed:16813579). In roots, accumulates transiently during flower buds initiation (PubMed:29872026). In leaves, mainly observed after budding (PubMed:29872026). High levels in stems and capsules (walls and content), especially after flowering (PubMed:29872026).</text>
</comment>
<comment type="disruption phenotype">
    <text evidence="9 11">Plants silenced for all codeinone reductase proteins accumulate the precursor alkaloid (S)-reticuline at the expense of morphine, codeine, oripavine and thebaine.</text>
</comment>
<comment type="biotechnology">
    <text evidence="12">In yeast (Saccharomyces cerevisiae) engineered to produce opiate alkaloids, the expression of COR proteins leads to the accumulation of neopine and neomorphine as major products.</text>
</comment>
<comment type="miscellaneous">
    <text evidence="16">Useful marker for the forensic DNA analysis of opium poppy.</text>
</comment>
<comment type="similarity">
    <text evidence="15">Belongs to the aldo/keto reductase family.</text>
</comment>
<reference key="1">
    <citation type="journal article" date="1999" name="Plant J.">
        <title>Molecular cloning and functional expression of codeinone reductase: the penultimate enzyme in morphine biosynthesis in the opium poppy Papaver somniferum.</title>
        <authorList>
            <person name="Unterlinner B."/>
            <person name="Lenz R."/>
            <person name="Kutchan T.M."/>
        </authorList>
    </citation>
    <scope>NUCLEOTIDE SEQUENCE [MRNA]</scope>
    <scope>PROTEIN SEQUENCE OF 130-135; 172-177; 233-243 AND 245-248</scope>
    <scope>FUNCTION</scope>
    <scope>TISSUE SPECIFICITY</scope>
    <scope>BIOPHYSICOCHEMICAL PROPERTIES</scope>
    <scope>CATALYTIC ACTIVITY</scope>
    <scope>PATHWAY</scope>
</reference>
<reference key="2">
    <citation type="journal article" date="2010" name="J. Forensic Sci.">
        <title>An assessment of the utility of universal and specific genetic markers for Opium poppy identification.</title>
        <authorList>
            <person name="Lee E.J."/>
            <person name="Hwang I.K."/>
            <person name="Kim N.Y."/>
            <person name="Lee K.L."/>
            <person name="Han M.S."/>
            <person name="Lee Y.H."/>
            <person name="Kim M.Y."/>
            <person name="Yang M.S."/>
        </authorList>
    </citation>
    <scope>NUCLEOTIDE SEQUENCE [GENOMIC DNA]</scope>
</reference>
<reference key="3">
    <citation type="journal article" date="2018" name="Science">
        <title>The opium poppy genome and morphinan production.</title>
        <authorList>
            <person name="Guo L."/>
            <person name="Winzer T."/>
            <person name="Yang X."/>
            <person name="Li Y."/>
            <person name="Ning Z."/>
            <person name="He Z."/>
            <person name="Teodor R."/>
            <person name="Lu Y."/>
            <person name="Bowser T.A."/>
            <person name="Graham I.A."/>
            <person name="Ye K."/>
        </authorList>
    </citation>
    <scope>NUCLEOTIDE SEQUENCE [LARGE SCALE GENOMIC DNA]</scope>
    <source>
        <strain>cv. HN1</strain>
        <tissue>Leaf</tissue>
    </source>
</reference>
<reference key="4">
    <citation type="journal article" date="2000" name="Electrophoresis">
        <title>Characterization of proteins in latex of the opium poppy (Papaver somniferum) using two-dimensional gel electrophoresis and microsequencing.</title>
        <authorList>
            <person name="Decker G."/>
            <person name="Wanner G."/>
            <person name="Zenk M.H."/>
            <person name="Lottspeich F."/>
        </authorList>
    </citation>
    <scope>IDENTIFICATION BY MASS SPECTROMETRY</scope>
    <scope>SUBCELLULAR LOCATION</scope>
    <scope>TISSUE SPECIFICITY</scope>
</reference>
<reference key="5">
    <citation type="journal article" date="2003" name="Plant Cell">
        <title>A tale of three cell types: alkaloid biosynthesis is localized to sieve elements in opium poppy.</title>
        <authorList>
            <person name="Bird D.A."/>
            <person name="Franceschi V.R."/>
            <person name="Facchini P.J."/>
        </authorList>
    </citation>
    <scope>TISSUE SPECIFICITY</scope>
    <scope>SUBCELLULAR LOCATION</scope>
</reference>
<reference key="6">
    <citation type="journal article" date="2004" name="Nat. Biotechnol.">
        <title>RNAi-mediated replacement of morphine with the nonnarcotic alkaloid reticuline in opium poppy.</title>
        <authorList>
            <person name="Allen R.S."/>
            <person name="Millgate A.G."/>
            <person name="Chitty J.A."/>
            <person name="Thisleton J."/>
            <person name="Miller J.A."/>
            <person name="Fist A.J."/>
            <person name="Gerlach W.L."/>
            <person name="Larkin P.J."/>
        </authorList>
    </citation>
    <scope>FUNCTION</scope>
    <scope>DISRUPTION PHENOTYPE</scope>
</reference>
<reference key="7">
    <citation type="journal article" date="2004" name="Proc. Natl. Acad. Sci. U.S.A.">
        <title>The roles of latex and the vascular bundle in morphine biosynthesis in the opium poppy, Papaver somniferum.</title>
        <authorList>
            <person name="Weid M."/>
            <person name="Ziegler J."/>
            <person name="Kutchan T.M."/>
        </authorList>
    </citation>
    <scope>TISSUE SPECIFICITY</scope>
</reference>
<reference key="8">
    <citation type="journal article" date="2006" name="Plant J.">
        <title>The role of phloem sieve elements and laticifers in the biosynthesis and accumulation of alkaloids in opium poppy.</title>
        <authorList>
            <person name="Samanani N."/>
            <person name="Alcantara J."/>
            <person name="Bourgault R."/>
            <person name="Zulak K.G."/>
            <person name="Facchini P.J."/>
        </authorList>
    </citation>
    <scope>DEVELOPMENTAL STAGE</scope>
    <source>
        <strain>cv. Louisiana</strain>
        <strain>cv. Marianne</strain>
    </source>
</reference>
<reference key="9">
    <citation type="journal article" date="2012" name="Plant J.">
        <title>Systematic knockdown of morphine pathway enzymes in opium poppy using virus-induced gene silencing.</title>
        <authorList>
            <person name="Wijekoon C.P."/>
            <person name="Facchini P.J."/>
        </authorList>
    </citation>
    <scope>FUNCTION</scope>
    <scope>DISRUPTION PHENOTYPE</scope>
    <scope>CATALYTIC ACTIVITY</scope>
</reference>
<reference key="10">
    <citation type="journal article" date="2018" name="J. Biosci.">
        <title>Spatiotemporal oscillations of morphinan alkaloids in opium poppy.</title>
        <authorList>
            <person name="Rezaei M."/>
            <person name="Naghavi M.R."/>
            <person name="Hosseinzadeh A."/>
            <person name="Abasi A."/>
            <person name="Nasiri J."/>
        </authorList>
    </citation>
    <scope>TISSUE SPECIFICITY</scope>
    <scope>DEVELOPMENTAL STAGE</scope>
</reference>
<reference key="11">
    <citation type="journal article" date="2018" name="Plant J.">
        <title>Codeinone reductase isoforms with differential stability, efficiency and product selectivity in opium poppy.</title>
        <authorList>
            <person name="Dastmalchi M."/>
            <person name="Chang L."/>
            <person name="Torres M.A."/>
            <person name="Ng K.K.S."/>
            <person name="Facchini P.J."/>
        </authorList>
    </citation>
    <scope>FUNCTION</scope>
    <scope>MUTAGENESIS OF ALA-25; GLU-111; THR-145; SER-165 AND 319-GLU--ASP-321</scope>
    <scope>CATALYTIC ACTIVITY</scope>
    <scope>BIOTECHNOLOGY</scope>
    <scope>PATHWAY</scope>
    <source>
        <strain>cv. Bea's Choice</strain>
    </source>
</reference>
<protein>
    <recommendedName>
        <fullName evidence="14">NADPH-dependent codeinone reductase 1-4</fullName>
        <shortName evidence="15">PsCor1.4</shortName>
        <ecNumber evidence="5 12">1.1.1.247</ecNumber>
    </recommendedName>
</protein>
<evidence type="ECO:0000250" key="1">
    <source>
        <dbReference type="UniProtKB" id="P06632"/>
    </source>
</evidence>
<evidence type="ECO:0000250" key="2">
    <source>
        <dbReference type="UniProtKB" id="Q76L36"/>
    </source>
</evidence>
<evidence type="ECO:0000250" key="3">
    <source>
        <dbReference type="UniProtKB" id="Q9SQ68"/>
    </source>
</evidence>
<evidence type="ECO:0000256" key="4">
    <source>
        <dbReference type="SAM" id="MobiDB-lite"/>
    </source>
</evidence>
<evidence type="ECO:0000269" key="5">
    <source>
    </source>
</evidence>
<evidence type="ECO:0000269" key="6">
    <source>
    </source>
</evidence>
<evidence type="ECO:0000269" key="7">
    <source>
    </source>
</evidence>
<evidence type="ECO:0000269" key="8">
    <source>
    </source>
</evidence>
<evidence type="ECO:0000269" key="9">
    <source>
    </source>
</evidence>
<evidence type="ECO:0000269" key="10">
    <source>
    </source>
</evidence>
<evidence type="ECO:0000269" key="11">
    <source>
    </source>
</evidence>
<evidence type="ECO:0000269" key="12">
    <source>
    </source>
</evidence>
<evidence type="ECO:0000269" key="13">
    <source>
    </source>
</evidence>
<evidence type="ECO:0000303" key="14">
    <source>
    </source>
</evidence>
<evidence type="ECO:0000305" key="15"/>
<evidence type="ECO:0000305" key="16">
    <source>
    </source>
</evidence>
<evidence type="ECO:0000312" key="17">
    <source>
        <dbReference type="EMBL" id="RZC68126.1"/>
    </source>
</evidence>
<dbReference type="EC" id="1.1.1.247" evidence="5 12"/>
<dbReference type="EMBL" id="AF108435">
    <property type="protein sequence ID" value="AAF13739.1"/>
    <property type="molecule type" value="mRNA"/>
</dbReference>
<dbReference type="EMBL" id="FJ596161">
    <property type="protein sequence ID" value="ACM44063.1"/>
    <property type="molecule type" value="Genomic_DNA"/>
</dbReference>
<dbReference type="EMBL" id="CM010721">
    <property type="protein sequence ID" value="RZC68126.1"/>
    <property type="molecule type" value="Genomic_DNA"/>
</dbReference>
<dbReference type="SMR" id="Q9SQ67"/>
<dbReference type="STRING" id="3469.A0A4Y7K5M1"/>
<dbReference type="EnsemblPlants" id="RZC68126">
    <property type="protein sequence ID" value="RZC68126"/>
    <property type="gene ID" value="C5167_031384"/>
</dbReference>
<dbReference type="Gramene" id="RZC68126">
    <property type="protein sequence ID" value="RZC68126"/>
    <property type="gene ID" value="C5167_031384"/>
</dbReference>
<dbReference type="OMA" id="CYGTEVA"/>
<dbReference type="OrthoDB" id="416253at2759"/>
<dbReference type="BRENDA" id="1.1.1.247">
    <property type="organism ID" value="4515"/>
</dbReference>
<dbReference type="UniPathway" id="UPA00852"/>
<dbReference type="Proteomes" id="UP000316621">
    <property type="component" value="Chromosome 7"/>
</dbReference>
<dbReference type="GO" id="GO:0005829">
    <property type="term" value="C:cytosol"/>
    <property type="evidence" value="ECO:0000314"/>
    <property type="project" value="UniProtKB"/>
</dbReference>
<dbReference type="GO" id="GO:0047036">
    <property type="term" value="F:codeinone reductase (NADPH) activity"/>
    <property type="evidence" value="ECO:0000314"/>
    <property type="project" value="UniProtKB"/>
</dbReference>
<dbReference type="GO" id="GO:0016491">
    <property type="term" value="F:oxidoreductase activity"/>
    <property type="evidence" value="ECO:0000314"/>
    <property type="project" value="UniProtKB"/>
</dbReference>
<dbReference type="GO" id="GO:0009820">
    <property type="term" value="P:alkaloid metabolic process"/>
    <property type="evidence" value="ECO:0007669"/>
    <property type="project" value="UniProtKB-KW"/>
</dbReference>
<dbReference type="CDD" id="cd19124">
    <property type="entry name" value="AKR_AKR4A_4B"/>
    <property type="match status" value="1"/>
</dbReference>
<dbReference type="FunFam" id="3.20.20.100:FF:000013">
    <property type="entry name" value="NADPH-dependent codeinone reductase 1-1"/>
    <property type="match status" value="1"/>
</dbReference>
<dbReference type="Gene3D" id="3.20.20.100">
    <property type="entry name" value="NADP-dependent oxidoreductase domain"/>
    <property type="match status" value="1"/>
</dbReference>
<dbReference type="InterPro" id="IPR020471">
    <property type="entry name" value="AKR"/>
</dbReference>
<dbReference type="InterPro" id="IPR044497">
    <property type="entry name" value="AKR4A/B"/>
</dbReference>
<dbReference type="InterPro" id="IPR018170">
    <property type="entry name" value="Aldo/ket_reductase_CS"/>
</dbReference>
<dbReference type="InterPro" id="IPR023210">
    <property type="entry name" value="NADP_OxRdtase_dom"/>
</dbReference>
<dbReference type="InterPro" id="IPR036812">
    <property type="entry name" value="NADP_OxRdtase_dom_sf"/>
</dbReference>
<dbReference type="PANTHER" id="PTHR11732">
    <property type="entry name" value="ALDO/KETO REDUCTASE"/>
    <property type="match status" value="1"/>
</dbReference>
<dbReference type="Pfam" id="PF00248">
    <property type="entry name" value="Aldo_ket_red"/>
    <property type="match status" value="1"/>
</dbReference>
<dbReference type="PIRSF" id="PIRSF000097">
    <property type="entry name" value="AKR"/>
    <property type="match status" value="1"/>
</dbReference>
<dbReference type="PRINTS" id="PR00069">
    <property type="entry name" value="ALDKETRDTASE"/>
</dbReference>
<dbReference type="SUPFAM" id="SSF51430">
    <property type="entry name" value="NAD(P)-linked oxidoreductase"/>
    <property type="match status" value="1"/>
</dbReference>
<dbReference type="PROSITE" id="PS00798">
    <property type="entry name" value="ALDOKETO_REDUCTASE_1"/>
    <property type="match status" value="1"/>
</dbReference>
<dbReference type="PROSITE" id="PS00062">
    <property type="entry name" value="ALDOKETO_REDUCTASE_2"/>
    <property type="match status" value="1"/>
</dbReference>
<dbReference type="PROSITE" id="PS00063">
    <property type="entry name" value="ALDOKETO_REDUCTASE_3"/>
    <property type="match status" value="1"/>
</dbReference>
<gene>
    <name evidence="14" type="primary">COR1.4</name>
    <name evidence="17" type="ORF">C5167_031384</name>
</gene>
<feature type="chain" id="PRO_0000418594" description="NADPH-dependent codeinone reductase 1-4">
    <location>
        <begin position="1"/>
        <end position="321"/>
    </location>
</feature>
<feature type="region of interest" description="Disordered" evidence="4">
    <location>
        <begin position="299"/>
        <end position="321"/>
    </location>
</feature>
<feature type="active site" description="Proton donor" evidence="1">
    <location>
        <position position="56"/>
    </location>
</feature>
<feature type="active site" description="Proton donor" evidence="2">
    <location>
        <position position="119"/>
    </location>
</feature>
<feature type="binding site" evidence="2">
    <location>
        <position position="27"/>
    </location>
    <ligand>
        <name>NADPH</name>
        <dbReference type="ChEBI" id="CHEBI:57783"/>
    </ligand>
</feature>
<feature type="binding site" evidence="2">
    <location>
        <position position="51"/>
    </location>
    <ligand>
        <name>NADPH</name>
        <dbReference type="ChEBI" id="CHEBI:57783"/>
    </ligand>
</feature>
<feature type="binding site" evidence="1">
    <location>
        <position position="119"/>
    </location>
    <ligand>
        <name>substrate</name>
    </ligand>
</feature>
<feature type="binding site" evidence="2">
    <location>
        <position position="165"/>
    </location>
    <ligand>
        <name>NADPH</name>
        <dbReference type="ChEBI" id="CHEBI:57783"/>
    </ligand>
</feature>
<feature type="binding site" evidence="2">
    <location>
        <position position="187"/>
    </location>
    <ligand>
        <name>NADPH</name>
        <dbReference type="ChEBI" id="CHEBI:57783"/>
    </ligand>
</feature>
<feature type="binding site" evidence="2">
    <location>
        <position position="214"/>
    </location>
    <ligand>
        <name>NADPH</name>
        <dbReference type="ChEBI" id="CHEBI:57783"/>
    </ligand>
</feature>
<feature type="binding site" evidence="2">
    <location>
        <position position="216"/>
    </location>
    <ligand>
        <name>NADPH</name>
        <dbReference type="ChEBI" id="CHEBI:57783"/>
    </ligand>
</feature>
<feature type="binding site" evidence="2">
    <location>
        <position position="264"/>
    </location>
    <ligand>
        <name>NADPH</name>
        <dbReference type="ChEBI" id="CHEBI:57783"/>
    </ligand>
</feature>
<feature type="binding site" evidence="2">
    <location>
        <position position="269"/>
    </location>
    <ligand>
        <name>NADPH</name>
        <dbReference type="ChEBI" id="CHEBI:57783"/>
    </ligand>
</feature>
<feature type="site" description="Lowers pKa of active site Tyr" evidence="2">
    <location>
        <position position="86"/>
    </location>
</feature>
<feature type="mutagenesis site" description="Increased neopine production and slightly enhanced velocity for forward reaction. Slightly enhanced velocity for reversed reaction; when associated with D-111; S-145 and C-165." evidence="12">
    <original>A</original>
    <variation>V</variation>
    <location>
        <position position="25"/>
    </location>
</feature>
<feature type="mutagenesis site" description="Normal neopine production; when associated with S-145 and C-165. Slightly enhanced velocity for reversed reaction; when associated with V-25; S-145 and C-165." evidence="12">
    <original>E</original>
    <variation>D</variation>
    <location>
        <position position="111"/>
    </location>
</feature>
<feature type="mutagenesis site" description="Increased neopine production and slightly enhanced velocity for forward reaction. Normal neopine production; when associated with D-111 and C-165. Slightly enhanced velocity for reversed reaction; when associated with V-25; D-111 and C-165." evidence="12">
    <original>T</original>
    <variation>S</variation>
    <location>
        <position position="145"/>
    </location>
</feature>
<feature type="mutagenesis site" description="Normal neopine production; when associated with D-111 and S-145. Slightly enhanced velocity for reversed reaction; when associated with V-25; D-111 and S-145." evidence="12">
    <original>S</original>
    <variation>C</variation>
    <location>
        <position position="165"/>
    </location>
</feature>
<feature type="mutagenesis site" description="Slightly reduced neopine yield." evidence="12">
    <original>EKD</original>
    <variation>GEV</variation>
    <location>
        <begin position="319"/>
        <end position="321"/>
    </location>
</feature>
<feature type="sequence conflict" description="In Ref. 1; AAF13739." evidence="15" ref="1">
    <original>T</original>
    <variation>S</variation>
    <location>
        <position position="145"/>
    </location>
</feature>
<feature type="sequence conflict" description="In Ref. 1; AAF13739." evidence="15" ref="1">
    <original>D</original>
    <variation>A</variation>
    <location>
        <position position="301"/>
    </location>
</feature>